<evidence type="ECO:0000255" key="1"/>
<evidence type="ECO:0000256" key="2">
    <source>
        <dbReference type="SAM" id="MobiDB-lite"/>
    </source>
</evidence>
<evidence type="ECO:0000305" key="3"/>
<feature type="chain" id="PRO_0000350793" description="Putative uncharacterized protein DDB_G0285031">
    <location>
        <begin position="1"/>
        <end position="795"/>
    </location>
</feature>
<feature type="region of interest" description="Disordered" evidence="2">
    <location>
        <begin position="242"/>
        <end position="278"/>
    </location>
</feature>
<feature type="region of interest" description="Disordered" evidence="2">
    <location>
        <begin position="326"/>
        <end position="430"/>
    </location>
</feature>
<feature type="region of interest" description="Disordered" evidence="2">
    <location>
        <begin position="455"/>
        <end position="484"/>
    </location>
</feature>
<feature type="region of interest" description="Disordered" evidence="2">
    <location>
        <begin position="673"/>
        <end position="743"/>
    </location>
</feature>
<feature type="coiled-coil region" evidence="1">
    <location>
        <begin position="228"/>
        <end position="280"/>
    </location>
</feature>
<feature type="compositionally biased region" description="Basic and acidic residues" evidence="2">
    <location>
        <begin position="251"/>
        <end position="264"/>
    </location>
</feature>
<feature type="compositionally biased region" description="Acidic residues" evidence="2">
    <location>
        <begin position="265"/>
        <end position="278"/>
    </location>
</feature>
<feature type="compositionally biased region" description="Low complexity" evidence="2">
    <location>
        <begin position="326"/>
        <end position="345"/>
    </location>
</feature>
<feature type="compositionally biased region" description="Acidic residues" evidence="2">
    <location>
        <begin position="362"/>
        <end position="373"/>
    </location>
</feature>
<feature type="compositionally biased region" description="Polar residues" evidence="2">
    <location>
        <begin position="377"/>
        <end position="398"/>
    </location>
</feature>
<feature type="compositionally biased region" description="Low complexity" evidence="2">
    <location>
        <begin position="399"/>
        <end position="414"/>
    </location>
</feature>
<feature type="compositionally biased region" description="Low complexity" evidence="2">
    <location>
        <begin position="455"/>
        <end position="480"/>
    </location>
</feature>
<feature type="compositionally biased region" description="Low complexity" evidence="2">
    <location>
        <begin position="673"/>
        <end position="729"/>
    </location>
</feature>
<feature type="compositionally biased region" description="Basic and acidic residues" evidence="2">
    <location>
        <begin position="732"/>
        <end position="743"/>
    </location>
</feature>
<dbReference type="EMBL" id="AAFI02000073">
    <property type="protein sequence ID" value="EAL64979.1"/>
    <property type="status" value="ALT_SEQ"/>
    <property type="molecule type" value="Genomic_DNA"/>
</dbReference>
<dbReference type="RefSeq" id="XP_640009.1">
    <property type="nucleotide sequence ID" value="XM_634917.1"/>
</dbReference>
<dbReference type="FunCoup" id="Q54NQ8">
    <property type="interactions" value="744"/>
</dbReference>
<dbReference type="PaxDb" id="44689-DDB0186335"/>
<dbReference type="EnsemblProtists" id="EAL64979">
    <property type="protein sequence ID" value="EAL64979"/>
    <property type="gene ID" value="DDB_G0285031"/>
</dbReference>
<dbReference type="GeneID" id="8624927"/>
<dbReference type="KEGG" id="ddi:DDB_G0285031"/>
<dbReference type="dictyBase" id="DDB_G0285031"/>
<dbReference type="VEuPathDB" id="AmoebaDB:DDB_G0285031"/>
<dbReference type="eggNOG" id="ENOG502RBU1">
    <property type="taxonomic scope" value="Eukaryota"/>
</dbReference>
<dbReference type="InParanoid" id="Q54NQ8"/>
<dbReference type="PRO" id="PR:Q54NQ8"/>
<dbReference type="Proteomes" id="UP000002195">
    <property type="component" value="Chromosome 4"/>
</dbReference>
<dbReference type="GO" id="GO:0016592">
    <property type="term" value="C:mediator complex"/>
    <property type="evidence" value="ECO:0000318"/>
    <property type="project" value="GO_Central"/>
</dbReference>
<dbReference type="GO" id="GO:0003713">
    <property type="term" value="F:transcription coactivator activity"/>
    <property type="evidence" value="ECO:0000318"/>
    <property type="project" value="GO_Central"/>
</dbReference>
<dbReference type="GO" id="GO:0045944">
    <property type="term" value="P:positive regulation of transcription by RNA polymerase II"/>
    <property type="evidence" value="ECO:0000318"/>
    <property type="project" value="GO_Central"/>
</dbReference>
<dbReference type="InterPro" id="IPR051647">
    <property type="entry name" value="Mediator_comp_sub12"/>
</dbReference>
<dbReference type="PANTHER" id="PTHR46007:SF12">
    <property type="entry name" value="C2H2-TYPE DOMAIN-CONTAINING PROTEIN-RELATED"/>
    <property type="match status" value="1"/>
</dbReference>
<dbReference type="PANTHER" id="PTHR46007">
    <property type="entry name" value="MEDIATOR OF RNA POLYMERASE II TRANSCRIPTION SUBUNIT 12"/>
    <property type="match status" value="1"/>
</dbReference>
<keyword id="KW-0175">Coiled coil</keyword>
<keyword id="KW-1185">Reference proteome</keyword>
<protein>
    <recommendedName>
        <fullName>Putative uncharacterized protein DDB_G0285031</fullName>
    </recommendedName>
</protein>
<organism>
    <name type="scientific">Dictyostelium discoideum</name>
    <name type="common">Social amoeba</name>
    <dbReference type="NCBI Taxonomy" id="44689"/>
    <lineage>
        <taxon>Eukaryota</taxon>
        <taxon>Amoebozoa</taxon>
        <taxon>Evosea</taxon>
        <taxon>Eumycetozoa</taxon>
        <taxon>Dictyostelia</taxon>
        <taxon>Dictyosteliales</taxon>
        <taxon>Dictyosteliaceae</taxon>
        <taxon>Dictyostelium</taxon>
    </lineage>
</organism>
<gene>
    <name type="ORF">DDB_G0285031</name>
</gene>
<reference key="1">
    <citation type="journal article" date="2005" name="Nature">
        <title>The genome of the social amoeba Dictyostelium discoideum.</title>
        <authorList>
            <person name="Eichinger L."/>
            <person name="Pachebat J.A."/>
            <person name="Gloeckner G."/>
            <person name="Rajandream M.A."/>
            <person name="Sucgang R."/>
            <person name="Berriman M."/>
            <person name="Song J."/>
            <person name="Olsen R."/>
            <person name="Szafranski K."/>
            <person name="Xu Q."/>
            <person name="Tunggal B."/>
            <person name="Kummerfeld S."/>
            <person name="Madera M."/>
            <person name="Konfortov B.A."/>
            <person name="Rivero F."/>
            <person name="Bankier A.T."/>
            <person name="Lehmann R."/>
            <person name="Hamlin N."/>
            <person name="Davies R."/>
            <person name="Gaudet P."/>
            <person name="Fey P."/>
            <person name="Pilcher K."/>
            <person name="Chen G."/>
            <person name="Saunders D."/>
            <person name="Sodergren E.J."/>
            <person name="Davis P."/>
            <person name="Kerhornou A."/>
            <person name="Nie X."/>
            <person name="Hall N."/>
            <person name="Anjard C."/>
            <person name="Hemphill L."/>
            <person name="Bason N."/>
            <person name="Farbrother P."/>
            <person name="Desany B."/>
            <person name="Just E."/>
            <person name="Morio T."/>
            <person name="Rost R."/>
            <person name="Churcher C.M."/>
            <person name="Cooper J."/>
            <person name="Haydock S."/>
            <person name="van Driessche N."/>
            <person name="Cronin A."/>
            <person name="Goodhead I."/>
            <person name="Muzny D.M."/>
            <person name="Mourier T."/>
            <person name="Pain A."/>
            <person name="Lu M."/>
            <person name="Harper D."/>
            <person name="Lindsay R."/>
            <person name="Hauser H."/>
            <person name="James K.D."/>
            <person name="Quiles M."/>
            <person name="Madan Babu M."/>
            <person name="Saito T."/>
            <person name="Buchrieser C."/>
            <person name="Wardroper A."/>
            <person name="Felder M."/>
            <person name="Thangavelu M."/>
            <person name="Johnson D."/>
            <person name="Knights A."/>
            <person name="Loulseged H."/>
            <person name="Mungall K.L."/>
            <person name="Oliver K."/>
            <person name="Price C."/>
            <person name="Quail M.A."/>
            <person name="Urushihara H."/>
            <person name="Hernandez J."/>
            <person name="Rabbinowitsch E."/>
            <person name="Steffen D."/>
            <person name="Sanders M."/>
            <person name="Ma J."/>
            <person name="Kohara Y."/>
            <person name="Sharp S."/>
            <person name="Simmonds M.N."/>
            <person name="Spiegler S."/>
            <person name="Tivey A."/>
            <person name="Sugano S."/>
            <person name="White B."/>
            <person name="Walker D."/>
            <person name="Woodward J.R."/>
            <person name="Winckler T."/>
            <person name="Tanaka Y."/>
            <person name="Shaulsky G."/>
            <person name="Schleicher M."/>
            <person name="Weinstock G.M."/>
            <person name="Rosenthal A."/>
            <person name="Cox E.C."/>
            <person name="Chisholm R.L."/>
            <person name="Gibbs R.A."/>
            <person name="Loomis W.F."/>
            <person name="Platzer M."/>
            <person name="Kay R.R."/>
            <person name="Williams J.G."/>
            <person name="Dear P.H."/>
            <person name="Noegel A.A."/>
            <person name="Barrell B.G."/>
            <person name="Kuspa A."/>
        </authorList>
    </citation>
    <scope>NUCLEOTIDE SEQUENCE [LARGE SCALE GENOMIC DNA]</scope>
    <source>
        <strain>AX4</strain>
    </source>
</reference>
<accession>Q54NQ8</accession>
<sequence>MDILLNLINYSNNLKSQIKNNNNPENGSIVVLLSNISNDFEEIKDLQYKQQQQQQQNPNNIIKTFSNTIFKRIKHFISISINFGIKTIATKLLLIKKRKNITSSTSTSTCTTITIDKIINTILFENLNIIIKLLSLIEMIIIREYNYCKNTITQQQQQPILIWIGNSTNNNNKNKKIKIINLESIEKSINYLKTIKQQNKNTRIIIDNDIPLDHIKQLLSQFNNFPINIICFKNKCKNNEKEKKEEEEDHDHDHDDKKKEKEDKEKEEEEEEEDSNDDFEINDYITFLSIDFNNHFISLSNTEILYDYFINSMNYKPKFITTTTTTTTTTVNGSKNSSNTTTPITTKDDIDLDSDGEKKESDDDDDDDLTDEDTSQHNEIYSTSPKVSHSTFCQSSPTLLDLDLQQQQQQQQQQNDKIGGQQEKQITPNRSYTIRNMKPVSNQRYYSTPNKTVIINQQQQQQQQQQSSTSPSISPSSSNIKSEPNFARIDYKTSMFISNKPVAITTGKVATTQIHLRDALDNPVPTNLTSSNPSGFGPISSSPLHLTLLGPTNEILPFYCFVVGSGIFGISFFPTIHGIYTLSASLDYNNNNNNNNNNNNNSNNNNGIKKDLSIKNSPTIFKSTADGIISPNEIRSLHNSNEKKRKLPLLDFESTSNDSIDLLDFIIDSVDKNNNNNNNNNNNNNNNNNNNNNNNNNNNNNNNNNNNNNNNNNNNNNNNKENHNQNQNEIENENKNENENENENDKNGIIFINQNLNKEFNESSPEMSPTLQVEDDSNISAVNNDSSEIEATLAI</sequence>
<name>Y6335_DICDI</name>
<comment type="sequence caution" evidence="3">
    <conflict type="erroneous gene model prediction">
        <sequence resource="EMBL-CDS" id="EAL64979"/>
    </conflict>
</comment>
<proteinExistence type="predicted"/>